<dbReference type="EC" id="6.1.1.23" evidence="1"/>
<dbReference type="EMBL" id="CP001095">
    <property type="protein sequence ID" value="ACJ51810.1"/>
    <property type="molecule type" value="Genomic_DNA"/>
</dbReference>
<dbReference type="EMBL" id="AP010889">
    <property type="protein sequence ID" value="BAJ68311.1"/>
    <property type="molecule type" value="Genomic_DNA"/>
</dbReference>
<dbReference type="RefSeq" id="WP_007053205.1">
    <property type="nucleotide sequence ID" value="NZ_JDTT01000032.1"/>
</dbReference>
<dbReference type="SMR" id="B7GPT0"/>
<dbReference type="GeneID" id="69578652"/>
<dbReference type="KEGG" id="bln:Blon_0706"/>
<dbReference type="KEGG" id="blon:BLIJ_0719"/>
<dbReference type="PATRIC" id="fig|391904.8.peg.722"/>
<dbReference type="HOGENOM" id="CLU_014330_3_2_11"/>
<dbReference type="Proteomes" id="UP000001360">
    <property type="component" value="Chromosome"/>
</dbReference>
<dbReference type="GO" id="GO:0005737">
    <property type="term" value="C:cytoplasm"/>
    <property type="evidence" value="ECO:0007669"/>
    <property type="project" value="UniProtKB-SubCell"/>
</dbReference>
<dbReference type="GO" id="GO:0004815">
    <property type="term" value="F:aspartate-tRNA ligase activity"/>
    <property type="evidence" value="ECO:0007669"/>
    <property type="project" value="UniProtKB-UniRule"/>
</dbReference>
<dbReference type="GO" id="GO:0050560">
    <property type="term" value="F:aspartate-tRNA(Asn) ligase activity"/>
    <property type="evidence" value="ECO:0007669"/>
    <property type="project" value="UniProtKB-EC"/>
</dbReference>
<dbReference type="GO" id="GO:0005524">
    <property type="term" value="F:ATP binding"/>
    <property type="evidence" value="ECO:0007669"/>
    <property type="project" value="UniProtKB-UniRule"/>
</dbReference>
<dbReference type="GO" id="GO:0003676">
    <property type="term" value="F:nucleic acid binding"/>
    <property type="evidence" value="ECO:0007669"/>
    <property type="project" value="InterPro"/>
</dbReference>
<dbReference type="GO" id="GO:0006422">
    <property type="term" value="P:aspartyl-tRNA aminoacylation"/>
    <property type="evidence" value="ECO:0007669"/>
    <property type="project" value="UniProtKB-UniRule"/>
</dbReference>
<dbReference type="CDD" id="cd00777">
    <property type="entry name" value="AspRS_core"/>
    <property type="match status" value="1"/>
</dbReference>
<dbReference type="CDD" id="cd04317">
    <property type="entry name" value="EcAspRS_like_N"/>
    <property type="match status" value="1"/>
</dbReference>
<dbReference type="Gene3D" id="3.30.930.10">
    <property type="entry name" value="Bira Bifunctional Protein, Domain 2"/>
    <property type="match status" value="1"/>
</dbReference>
<dbReference type="Gene3D" id="3.30.1360.30">
    <property type="entry name" value="GAD-like domain"/>
    <property type="match status" value="1"/>
</dbReference>
<dbReference type="Gene3D" id="2.40.50.140">
    <property type="entry name" value="Nucleic acid-binding proteins"/>
    <property type="match status" value="1"/>
</dbReference>
<dbReference type="HAMAP" id="MF_00044">
    <property type="entry name" value="Asp_tRNA_synth_type1"/>
    <property type="match status" value="1"/>
</dbReference>
<dbReference type="InterPro" id="IPR004364">
    <property type="entry name" value="Aa-tRNA-synt_II"/>
</dbReference>
<dbReference type="InterPro" id="IPR006195">
    <property type="entry name" value="aa-tRNA-synth_II"/>
</dbReference>
<dbReference type="InterPro" id="IPR045864">
    <property type="entry name" value="aa-tRNA-synth_II/BPL/LPL"/>
</dbReference>
<dbReference type="InterPro" id="IPR004524">
    <property type="entry name" value="Asp-tRNA-ligase_1"/>
</dbReference>
<dbReference type="InterPro" id="IPR047089">
    <property type="entry name" value="Asp-tRNA-ligase_1_N"/>
</dbReference>
<dbReference type="InterPro" id="IPR002312">
    <property type="entry name" value="Asp/Asn-tRNA-synth_IIb"/>
</dbReference>
<dbReference type="InterPro" id="IPR047090">
    <property type="entry name" value="AspRS_core"/>
</dbReference>
<dbReference type="InterPro" id="IPR004115">
    <property type="entry name" value="GAD-like_sf"/>
</dbReference>
<dbReference type="InterPro" id="IPR029351">
    <property type="entry name" value="GAD_dom"/>
</dbReference>
<dbReference type="InterPro" id="IPR012340">
    <property type="entry name" value="NA-bd_OB-fold"/>
</dbReference>
<dbReference type="InterPro" id="IPR004365">
    <property type="entry name" value="NA-bd_OB_tRNA"/>
</dbReference>
<dbReference type="NCBIfam" id="TIGR00459">
    <property type="entry name" value="aspS_bact"/>
    <property type="match status" value="1"/>
</dbReference>
<dbReference type="NCBIfam" id="NF001750">
    <property type="entry name" value="PRK00476.1"/>
    <property type="match status" value="1"/>
</dbReference>
<dbReference type="PANTHER" id="PTHR22594:SF5">
    <property type="entry name" value="ASPARTATE--TRNA LIGASE, MITOCHONDRIAL"/>
    <property type="match status" value="1"/>
</dbReference>
<dbReference type="PANTHER" id="PTHR22594">
    <property type="entry name" value="ASPARTYL/LYSYL-TRNA SYNTHETASE"/>
    <property type="match status" value="1"/>
</dbReference>
<dbReference type="Pfam" id="PF02938">
    <property type="entry name" value="GAD"/>
    <property type="match status" value="1"/>
</dbReference>
<dbReference type="Pfam" id="PF00152">
    <property type="entry name" value="tRNA-synt_2"/>
    <property type="match status" value="1"/>
</dbReference>
<dbReference type="Pfam" id="PF01336">
    <property type="entry name" value="tRNA_anti-codon"/>
    <property type="match status" value="1"/>
</dbReference>
<dbReference type="PRINTS" id="PR01042">
    <property type="entry name" value="TRNASYNTHASP"/>
</dbReference>
<dbReference type="SUPFAM" id="SSF55681">
    <property type="entry name" value="Class II aaRS and biotin synthetases"/>
    <property type="match status" value="1"/>
</dbReference>
<dbReference type="SUPFAM" id="SSF55261">
    <property type="entry name" value="GAD domain-like"/>
    <property type="match status" value="1"/>
</dbReference>
<dbReference type="SUPFAM" id="SSF50249">
    <property type="entry name" value="Nucleic acid-binding proteins"/>
    <property type="match status" value="1"/>
</dbReference>
<dbReference type="PROSITE" id="PS50862">
    <property type="entry name" value="AA_TRNA_LIGASE_II"/>
    <property type="match status" value="1"/>
</dbReference>
<feature type="chain" id="PRO_1000198962" description="Aspartate--tRNA(Asp/Asn) ligase">
    <location>
        <begin position="1"/>
        <end position="599"/>
    </location>
</feature>
<feature type="region of interest" description="Aspartate" evidence="1">
    <location>
        <begin position="204"/>
        <end position="207"/>
    </location>
</feature>
<feature type="region of interest" description="Disordered" evidence="2">
    <location>
        <begin position="565"/>
        <end position="599"/>
    </location>
</feature>
<feature type="compositionally biased region" description="Acidic residues" evidence="2">
    <location>
        <begin position="590"/>
        <end position="599"/>
    </location>
</feature>
<feature type="binding site" evidence="1">
    <location>
        <position position="180"/>
    </location>
    <ligand>
        <name>L-aspartate</name>
        <dbReference type="ChEBI" id="CHEBI:29991"/>
    </ligand>
</feature>
<feature type="binding site" evidence="1">
    <location>
        <begin position="226"/>
        <end position="228"/>
    </location>
    <ligand>
        <name>ATP</name>
        <dbReference type="ChEBI" id="CHEBI:30616"/>
    </ligand>
</feature>
<feature type="binding site" evidence="1">
    <location>
        <position position="226"/>
    </location>
    <ligand>
        <name>L-aspartate</name>
        <dbReference type="ChEBI" id="CHEBI:29991"/>
    </ligand>
</feature>
<feature type="binding site" evidence="1">
    <location>
        <position position="235"/>
    </location>
    <ligand>
        <name>ATP</name>
        <dbReference type="ChEBI" id="CHEBI:30616"/>
    </ligand>
</feature>
<feature type="binding site" evidence="1">
    <location>
        <position position="457"/>
    </location>
    <ligand>
        <name>L-aspartate</name>
        <dbReference type="ChEBI" id="CHEBI:29991"/>
    </ligand>
</feature>
<feature type="binding site" evidence="1">
    <location>
        <position position="491"/>
    </location>
    <ligand>
        <name>ATP</name>
        <dbReference type="ChEBI" id="CHEBI:30616"/>
    </ligand>
</feature>
<feature type="binding site" evidence="1">
    <location>
        <position position="498"/>
    </location>
    <ligand>
        <name>L-aspartate</name>
        <dbReference type="ChEBI" id="CHEBI:29991"/>
    </ligand>
</feature>
<feature type="binding site" evidence="1">
    <location>
        <begin position="543"/>
        <end position="546"/>
    </location>
    <ligand>
        <name>ATP</name>
        <dbReference type="ChEBI" id="CHEBI:30616"/>
    </ligand>
</feature>
<feature type="site" description="Important for tRNA non-discrimination" evidence="1">
    <location>
        <position position="35"/>
    </location>
</feature>
<feature type="site" description="Important for tRNA non-discrimination" evidence="1">
    <location>
        <position position="81"/>
    </location>
</feature>
<name>SYDND_BIFLS</name>
<organism>
    <name type="scientific">Bifidobacterium longum subsp. infantis (strain ATCC 15697 / DSM 20088 / JCM 1222 / NCTC 11817 / S12)</name>
    <dbReference type="NCBI Taxonomy" id="391904"/>
    <lineage>
        <taxon>Bacteria</taxon>
        <taxon>Bacillati</taxon>
        <taxon>Actinomycetota</taxon>
        <taxon>Actinomycetes</taxon>
        <taxon>Bifidobacteriales</taxon>
        <taxon>Bifidobacteriaceae</taxon>
        <taxon>Bifidobacterium</taxon>
    </lineage>
</organism>
<sequence>MSQTAYRTHHATEVTEALVGQKVTLAGWVDRRRDHGGVAFIDLRDSTGLVQVVIYDEDMARPLRSEFVIQITGEVRLRPDGNENTHLATGKIEVVAETIEILAKSDALPFQVSTALENESENKLPGEDVRLKYRYLDLRRPSMQHNLKLRSDMAKAARHALEDMDFTEVETPTFIKSTPEGARDFVVPARLVPGSWYALPQSPQLLKQLLMVSGVERYYQLARCYRDEDFRADRQPEFTQLDMEMAYVDQEDVMAMTEKVIAAIWKSAGYEVQLPLPRITWKDAMDKYGSDKPDLRFGNPLVELTEYFKNTPFRVFQAPYVGAVVFKGGAATPRRQFDAWQDWARQRGAKGLAYVVFGENGELKGPVAKNLSDEERNGLREAVGAEEGDAVFFAAGSRESAQLLLGAVRVELASREGLLDPKKFAFTWVVDFPLFKPTDDPDDDDVAVGHSKWTSMHHPFTMPSKDWIDKFDKDPEHAMSDSYDIVCNGEEMGGGSVRIHRDDIQARVLDVLGITKEEADEKFGFLLEAFKYGAPPHAGLALGWDRTVSILAGADSIRDVIAFPKAGGGRDPLTGAPAPISDEQRAETGVDYDPDADEN</sequence>
<accession>B7GPT0</accession>
<accession>E8MQN6</accession>
<evidence type="ECO:0000255" key="1">
    <source>
        <dbReference type="HAMAP-Rule" id="MF_00044"/>
    </source>
</evidence>
<evidence type="ECO:0000256" key="2">
    <source>
        <dbReference type="SAM" id="MobiDB-lite"/>
    </source>
</evidence>
<reference key="1">
    <citation type="journal article" date="2008" name="Proc. Natl. Acad. Sci. U.S.A.">
        <title>The genome sequence of Bifidobacterium longum subsp. infantis reveals adaptations for milk utilization within the infant microbiome.</title>
        <authorList>
            <person name="Sela D.A."/>
            <person name="Chapman J."/>
            <person name="Adeuya A."/>
            <person name="Kim J.H."/>
            <person name="Chen F."/>
            <person name="Whitehead T.R."/>
            <person name="Lapidus A."/>
            <person name="Rokhsar D.S."/>
            <person name="Lebrilla C.B."/>
            <person name="German J.B."/>
            <person name="Price N.P."/>
            <person name="Richardson P.M."/>
            <person name="Mills D.A."/>
        </authorList>
    </citation>
    <scope>NUCLEOTIDE SEQUENCE [LARGE SCALE GENOMIC DNA]</scope>
    <source>
        <strain>ATCC 15697 / DSM 20088 / JCM 1222 / NCTC 11817 / S12</strain>
    </source>
</reference>
<reference key="2">
    <citation type="journal article" date="2011" name="Nature">
        <title>Bifidobacteria can protect from enteropathogenic infection through production of acetate.</title>
        <authorList>
            <person name="Fukuda S."/>
            <person name="Toh H."/>
            <person name="Hase K."/>
            <person name="Oshima K."/>
            <person name="Nakanishi Y."/>
            <person name="Yoshimura K."/>
            <person name="Tobe T."/>
            <person name="Clarke J.M."/>
            <person name="Topping D.L."/>
            <person name="Suzuki T."/>
            <person name="Taylor T.D."/>
            <person name="Itoh K."/>
            <person name="Kikuchi J."/>
            <person name="Morita H."/>
            <person name="Hattori M."/>
            <person name="Ohno H."/>
        </authorList>
    </citation>
    <scope>NUCLEOTIDE SEQUENCE [LARGE SCALE GENOMIC DNA]</scope>
    <source>
        <strain>ATCC 15697 / DSM 20088 / JCM 1222 / NCTC 11817 / S12</strain>
    </source>
</reference>
<comment type="function">
    <text evidence="1">Aspartyl-tRNA synthetase with relaxed tRNA specificity since it is able to aspartylate not only its cognate tRNA(Asp) but also tRNA(Asn). Reaction proceeds in two steps: L-aspartate is first activated by ATP to form Asp-AMP and then transferred to the acceptor end of tRNA(Asp/Asn).</text>
</comment>
<comment type="catalytic activity">
    <reaction evidence="1">
        <text>tRNA(Asx) + L-aspartate + ATP = L-aspartyl-tRNA(Asx) + AMP + diphosphate</text>
        <dbReference type="Rhea" id="RHEA:18349"/>
        <dbReference type="Rhea" id="RHEA-COMP:9710"/>
        <dbReference type="Rhea" id="RHEA-COMP:9711"/>
        <dbReference type="ChEBI" id="CHEBI:29991"/>
        <dbReference type="ChEBI" id="CHEBI:30616"/>
        <dbReference type="ChEBI" id="CHEBI:33019"/>
        <dbReference type="ChEBI" id="CHEBI:78442"/>
        <dbReference type="ChEBI" id="CHEBI:78516"/>
        <dbReference type="ChEBI" id="CHEBI:456215"/>
        <dbReference type="EC" id="6.1.1.23"/>
    </reaction>
</comment>
<comment type="subunit">
    <text evidence="1">Homodimer.</text>
</comment>
<comment type="subcellular location">
    <subcellularLocation>
        <location evidence="1">Cytoplasm</location>
    </subcellularLocation>
</comment>
<comment type="similarity">
    <text evidence="1">Belongs to the class-II aminoacyl-tRNA synthetase family. Type 1 subfamily.</text>
</comment>
<gene>
    <name evidence="1" type="primary">aspS</name>
    <name type="ordered locus">Blon_0706</name>
    <name type="ordered locus">BLIJ_0719</name>
</gene>
<keyword id="KW-0030">Aminoacyl-tRNA synthetase</keyword>
<keyword id="KW-0067">ATP-binding</keyword>
<keyword id="KW-0963">Cytoplasm</keyword>
<keyword id="KW-0436">Ligase</keyword>
<keyword id="KW-0547">Nucleotide-binding</keyword>
<keyword id="KW-0648">Protein biosynthesis</keyword>
<proteinExistence type="inferred from homology"/>
<protein>
    <recommendedName>
        <fullName evidence="1">Aspartate--tRNA(Asp/Asn) ligase</fullName>
        <ecNumber evidence="1">6.1.1.23</ecNumber>
    </recommendedName>
    <alternativeName>
        <fullName evidence="1">Aspartyl-tRNA synthetase</fullName>
        <shortName evidence="1">AspRS</shortName>
    </alternativeName>
    <alternativeName>
        <fullName evidence="1">Non-discriminating aspartyl-tRNA synthetase</fullName>
        <shortName evidence="1">ND-AspRS</shortName>
    </alternativeName>
</protein>